<dbReference type="EC" id="5.6.2.2" evidence="1"/>
<dbReference type="EMBL" id="L47978">
    <property type="protein sequence ID" value="AAB41037.1"/>
    <property type="molecule type" value="Genomic_DNA"/>
</dbReference>
<dbReference type="EMBL" id="L42453">
    <property type="protein sequence ID" value="AAA87239.1"/>
    <property type="molecule type" value="Genomic_DNA"/>
</dbReference>
<dbReference type="PIR" id="I39542">
    <property type="entry name" value="I39542"/>
</dbReference>
<dbReference type="SMR" id="P48369"/>
<dbReference type="STRING" id="1233098.GCA_000315855_04900"/>
<dbReference type="GO" id="GO:0005694">
    <property type="term" value="C:chromosome"/>
    <property type="evidence" value="ECO:0007669"/>
    <property type="project" value="InterPro"/>
</dbReference>
<dbReference type="GO" id="GO:0005737">
    <property type="term" value="C:cytoplasm"/>
    <property type="evidence" value="ECO:0007669"/>
    <property type="project" value="UniProtKB-SubCell"/>
</dbReference>
<dbReference type="GO" id="GO:0009330">
    <property type="term" value="C:DNA topoisomerase type II (double strand cut, ATP-hydrolyzing) complex"/>
    <property type="evidence" value="ECO:0007669"/>
    <property type="project" value="TreeGrafter"/>
</dbReference>
<dbReference type="GO" id="GO:0005524">
    <property type="term" value="F:ATP binding"/>
    <property type="evidence" value="ECO:0007669"/>
    <property type="project" value="UniProtKB-UniRule"/>
</dbReference>
<dbReference type="GO" id="GO:0003677">
    <property type="term" value="F:DNA binding"/>
    <property type="evidence" value="ECO:0007669"/>
    <property type="project" value="UniProtKB-UniRule"/>
</dbReference>
<dbReference type="GO" id="GO:0034335">
    <property type="term" value="F:DNA negative supercoiling activity"/>
    <property type="evidence" value="ECO:0007669"/>
    <property type="project" value="UniProtKB-ARBA"/>
</dbReference>
<dbReference type="GO" id="GO:0006265">
    <property type="term" value="P:DNA topological change"/>
    <property type="evidence" value="ECO:0007669"/>
    <property type="project" value="UniProtKB-UniRule"/>
</dbReference>
<dbReference type="GO" id="GO:0006261">
    <property type="term" value="P:DNA-templated DNA replication"/>
    <property type="evidence" value="ECO:0007669"/>
    <property type="project" value="UniProtKB-UniRule"/>
</dbReference>
<dbReference type="CDD" id="cd00187">
    <property type="entry name" value="TOP4c"/>
    <property type="match status" value="1"/>
</dbReference>
<dbReference type="FunFam" id="3.30.1360.40:FF:000002">
    <property type="entry name" value="DNA gyrase subunit A"/>
    <property type="match status" value="1"/>
</dbReference>
<dbReference type="FunFam" id="3.90.199.10:FF:000001">
    <property type="entry name" value="DNA gyrase subunit A"/>
    <property type="match status" value="1"/>
</dbReference>
<dbReference type="Gene3D" id="3.30.1360.40">
    <property type="match status" value="1"/>
</dbReference>
<dbReference type="Gene3D" id="2.120.10.90">
    <property type="entry name" value="DNA gyrase/topoisomerase IV, subunit A, C-terminal"/>
    <property type="match status" value="1"/>
</dbReference>
<dbReference type="Gene3D" id="3.90.199.10">
    <property type="entry name" value="Topoisomerase II, domain 5"/>
    <property type="match status" value="1"/>
</dbReference>
<dbReference type="Gene3D" id="1.10.268.10">
    <property type="entry name" value="Topoisomerase, domain 3"/>
    <property type="match status" value="1"/>
</dbReference>
<dbReference type="HAMAP" id="MF_01897">
    <property type="entry name" value="GyrA"/>
    <property type="match status" value="1"/>
</dbReference>
<dbReference type="InterPro" id="IPR005743">
    <property type="entry name" value="GyrA"/>
</dbReference>
<dbReference type="InterPro" id="IPR006691">
    <property type="entry name" value="GyrA/parC_rep"/>
</dbReference>
<dbReference type="InterPro" id="IPR035516">
    <property type="entry name" value="Gyrase/topoIV_suA_C"/>
</dbReference>
<dbReference type="InterPro" id="IPR013760">
    <property type="entry name" value="Topo_IIA-like_dom_sf"/>
</dbReference>
<dbReference type="InterPro" id="IPR013758">
    <property type="entry name" value="Topo_IIA_A/C_ab"/>
</dbReference>
<dbReference type="InterPro" id="IPR013757">
    <property type="entry name" value="Topo_IIA_A_a_sf"/>
</dbReference>
<dbReference type="InterPro" id="IPR002205">
    <property type="entry name" value="Topo_IIA_dom_A"/>
</dbReference>
<dbReference type="InterPro" id="IPR050220">
    <property type="entry name" value="Type_II_DNA_Topoisomerases"/>
</dbReference>
<dbReference type="NCBIfam" id="TIGR01063">
    <property type="entry name" value="gyrA"/>
    <property type="match status" value="1"/>
</dbReference>
<dbReference type="NCBIfam" id="NF004043">
    <property type="entry name" value="PRK05560.1"/>
    <property type="match status" value="1"/>
</dbReference>
<dbReference type="NCBIfam" id="NF004044">
    <property type="entry name" value="PRK05561.1"/>
    <property type="match status" value="1"/>
</dbReference>
<dbReference type="PANTHER" id="PTHR43493:SF5">
    <property type="entry name" value="DNA GYRASE SUBUNIT A, CHLOROPLASTIC_MITOCHONDRIAL"/>
    <property type="match status" value="1"/>
</dbReference>
<dbReference type="PANTHER" id="PTHR43493">
    <property type="entry name" value="DNA GYRASE/TOPOISOMERASE SUBUNIT A"/>
    <property type="match status" value="1"/>
</dbReference>
<dbReference type="Pfam" id="PF03989">
    <property type="entry name" value="DNA_gyraseA_C"/>
    <property type="match status" value="7"/>
</dbReference>
<dbReference type="Pfam" id="PF00521">
    <property type="entry name" value="DNA_topoisoIV"/>
    <property type="match status" value="1"/>
</dbReference>
<dbReference type="SMART" id="SM00434">
    <property type="entry name" value="TOP4c"/>
    <property type="match status" value="1"/>
</dbReference>
<dbReference type="SUPFAM" id="SSF101904">
    <property type="entry name" value="GyrA/ParC C-terminal domain-like"/>
    <property type="match status" value="2"/>
</dbReference>
<dbReference type="SUPFAM" id="SSF56719">
    <property type="entry name" value="Type II DNA topoisomerase"/>
    <property type="match status" value="1"/>
</dbReference>
<dbReference type="PROSITE" id="PS52040">
    <property type="entry name" value="TOPO_IIA"/>
    <property type="match status" value="1"/>
</dbReference>
<reference key="1">
    <citation type="submission" date="1995-10" db="EMBL/GenBank/DDBJ databases">
        <authorList>
            <person name="Oppegaard H."/>
        </authorList>
    </citation>
    <scope>NUCLEOTIDE SEQUENCE [GENOMIC DNA]</scope>
    <source>
        <strain>2148/89</strain>
    </source>
</reference>
<reference key="2">
    <citation type="journal article" date="1994" name="Antimicrob. Agents Chemother.">
        <title>gyrA mutations in quinolone-resistant isolates of the fish pathogen Aeromonas salmonicida.</title>
        <authorList>
            <person name="Oppegaard H."/>
            <person name="Sorum H."/>
        </authorList>
    </citation>
    <scope>NUCLEOTIDE SEQUENCE [GENOMIC DNA] OF 33-179</scope>
    <source>
        <strain>ATCC 14174 / NBRC 12659 / NCIMB 833</strain>
    </source>
</reference>
<name>GYRA_AERSA</name>
<proteinExistence type="inferred from homology"/>
<comment type="function">
    <text evidence="1">A type II topoisomerase that negatively supercoils closed circular double-stranded (ds) DNA in an ATP-dependent manner to modulate DNA topology and maintain chromosomes in an underwound state. Negative supercoiling favors strand separation, and DNA replication, transcription, recombination and repair, all of which involve strand separation. Also able to catalyze the interconversion of other topological isomers of dsDNA rings, including catenanes and knotted rings. Type II topoisomerases break and join 2 DNA strands simultaneously in an ATP-dependent manner.</text>
</comment>
<comment type="catalytic activity">
    <reaction evidence="1">
        <text>ATP-dependent breakage, passage and rejoining of double-stranded DNA.</text>
        <dbReference type="EC" id="5.6.2.2"/>
    </reaction>
</comment>
<comment type="subunit">
    <text evidence="1">Heterotetramer, composed of two GyrA and two GyrB chains. In the heterotetramer, GyrA contains the active site tyrosine that forms a transient covalent intermediate with DNA, while GyrB binds cofactors and catalyzes ATP hydrolysis.</text>
</comment>
<comment type="subcellular location">
    <subcellularLocation>
        <location evidence="1">Cytoplasm</location>
    </subcellularLocation>
</comment>
<comment type="miscellaneous">
    <text evidence="1">Few gyrases are as efficient as E.coli at forming negative supercoils. Not all organisms have 2 type II topoisomerases; in organisms with a single type II topoisomerase this enzyme also has to decatenate newly replicated chromosomes.</text>
</comment>
<comment type="similarity">
    <text evidence="1">Belongs to the type II topoisomerase GyrA/ParC subunit family.</text>
</comment>
<protein>
    <recommendedName>
        <fullName evidence="1">DNA gyrase subunit A</fullName>
        <ecNumber evidence="1">5.6.2.2</ecNumber>
    </recommendedName>
</protein>
<feature type="chain" id="PRO_0000145218" description="DNA gyrase subunit A">
    <location>
        <begin position="1"/>
        <end position="922"/>
    </location>
</feature>
<feature type="domain" description="Topo IIA-type catalytic" evidence="2">
    <location>
        <begin position="34"/>
        <end position="534"/>
    </location>
</feature>
<feature type="region of interest" description="Disordered" evidence="3">
    <location>
        <begin position="715"/>
        <end position="763"/>
    </location>
</feature>
<feature type="region of interest" description="Disordered" evidence="3">
    <location>
        <begin position="899"/>
        <end position="922"/>
    </location>
</feature>
<feature type="short sequence motif" description="GyrA-box" evidence="1">
    <location>
        <begin position="561"/>
        <end position="567"/>
    </location>
</feature>
<feature type="compositionally biased region" description="Acidic residues" evidence="3">
    <location>
        <begin position="723"/>
        <end position="743"/>
    </location>
</feature>
<feature type="active site" description="O-(5'-phospho-DNA)-tyrosine intermediate" evidence="1">
    <location>
        <position position="122"/>
    </location>
</feature>
<accession>P48369</accession>
<gene>
    <name evidence="1" type="primary">gyrA</name>
</gene>
<organism>
    <name type="scientific">Aeromonas salmonicida</name>
    <dbReference type="NCBI Taxonomy" id="645"/>
    <lineage>
        <taxon>Bacteria</taxon>
        <taxon>Pseudomonadati</taxon>
        <taxon>Pseudomonadota</taxon>
        <taxon>Gammaproteobacteria</taxon>
        <taxon>Aeromonadales</taxon>
        <taxon>Aeromonadaceae</taxon>
        <taxon>Aeromonas</taxon>
    </lineage>
</organism>
<keyword id="KW-0067">ATP-binding</keyword>
<keyword id="KW-0963">Cytoplasm</keyword>
<keyword id="KW-0238">DNA-binding</keyword>
<keyword id="KW-0413">Isomerase</keyword>
<keyword id="KW-0547">Nucleotide-binding</keyword>
<keyword id="KW-0799">Topoisomerase</keyword>
<sequence>MSDLAREITPINIEEELKSSYLDYAMSVIVGRALPDVRDGLKPVHRRVLFAMNELGNDWNKPYKKSARVVGDVIGKYHPHGDSAVYDTIVRLAQDFSMRYMLVDGQGNFGSVDGDSAAAMRYTEVRMARISHELLADLDKETVDWVPNYDGTEMIPAVMPTKVPNLLVNGSSGIAVGMAWNIPPHNLTEIVNGCLALIENGNLTIDELMTYITGPDFPTGAIINGRAGIVQAYRTGRGSVYVRAKAEVEVDDKTSRETIIIVHELPYQVNKARLIEKIAELVKEKKVEGISALRDESDKDACRIVIEIKRGESGEIVLNNLYKHTQLQTTFGINMVALDNNQPKVMNLKDILDAFLLHRREVVTRRTVFELRKARDRAHILEGLAVALANIDPIIELIRHSDTPADAKAKLVARGWELGNVAAMLEKAGDDAARPEWLEPEFGIREGQYFLTEQQAQAILDLRLHKLTGLEHGKILEEYQSLLDLIAELLFILASPERLMEVIRDELLAVREQYGDERPPEISASSAEINIEDLITPEDVVVTLSHQGYVKYQPITDYEAQRRGGRGKSATRIKEENFVERLLVANTHDTILCFSTRGKVYWLKVYQLPEASRGARGRPIINLLPLEEGERITAILPVKEYADDKYVFFATADGTVKKTSLSAFSRPLSSGIRAINLKEGDELIGVDITDGSNEIMLFSDAGKVVRFNEGSAAPMQPMLMSSDDVDGDDESVIDAGNDDDGSDNGEGSESTESKGTFKGVRPMGRTAGGVRGIRLLNGDKVVSLIVPRGEGAILTATENGYGKGTALTEYPTKSRGTQGVRSIKVDEDGKVSIDQVDDTDQIMLITNGGTLVRTRVSEVSIIGRNTGGVRLIRTGEDETVVGLQRIAESYEEENDVMAIDGEVSEGTDTAPDAGSAAADPEE</sequence>
<evidence type="ECO:0000255" key="1">
    <source>
        <dbReference type="HAMAP-Rule" id="MF_01897"/>
    </source>
</evidence>
<evidence type="ECO:0000255" key="2">
    <source>
        <dbReference type="PROSITE-ProRule" id="PRU01384"/>
    </source>
</evidence>
<evidence type="ECO:0000256" key="3">
    <source>
        <dbReference type="SAM" id="MobiDB-lite"/>
    </source>
</evidence>